<proteinExistence type="evidence at transcript level"/>
<dbReference type="EMBL" id="BC104497">
    <property type="protein sequence ID" value="AAI04498.1"/>
    <property type="molecule type" value="mRNA"/>
</dbReference>
<dbReference type="RefSeq" id="NP_001029841.1">
    <property type="nucleotide sequence ID" value="NM_001034669.1"/>
</dbReference>
<dbReference type="SMR" id="Q3SX45"/>
<dbReference type="FunCoup" id="Q3SX45">
    <property type="interactions" value="80"/>
</dbReference>
<dbReference type="STRING" id="9913.ENSBTAP00000063504"/>
<dbReference type="PaxDb" id="9913-ENSBTAP00000038371"/>
<dbReference type="GeneID" id="539244"/>
<dbReference type="KEGG" id="bta:539244"/>
<dbReference type="CTD" id="51676"/>
<dbReference type="eggNOG" id="KOG0504">
    <property type="taxonomic scope" value="Eukaryota"/>
</dbReference>
<dbReference type="InParanoid" id="Q3SX45"/>
<dbReference type="OrthoDB" id="539213at2759"/>
<dbReference type="UniPathway" id="UPA00143"/>
<dbReference type="Proteomes" id="UP000009136">
    <property type="component" value="Unplaced"/>
</dbReference>
<dbReference type="GO" id="GO:0001725">
    <property type="term" value="C:stress fiber"/>
    <property type="evidence" value="ECO:0007669"/>
    <property type="project" value="UniProtKB-SubCell"/>
</dbReference>
<dbReference type="GO" id="GO:0030018">
    <property type="term" value="C:Z disc"/>
    <property type="evidence" value="ECO:0007669"/>
    <property type="project" value="UniProtKB-SubCell"/>
</dbReference>
<dbReference type="GO" id="GO:0030036">
    <property type="term" value="P:actin cytoskeleton organization"/>
    <property type="evidence" value="ECO:0000250"/>
    <property type="project" value="UniProtKB"/>
</dbReference>
<dbReference type="GO" id="GO:0055013">
    <property type="term" value="P:cardiac muscle cell development"/>
    <property type="evidence" value="ECO:0000250"/>
    <property type="project" value="UniProtKB"/>
</dbReference>
<dbReference type="GO" id="GO:0055007">
    <property type="term" value="P:cardiac muscle cell differentiation"/>
    <property type="evidence" value="ECO:0000250"/>
    <property type="project" value="UniProtKB"/>
</dbReference>
<dbReference type="GO" id="GO:0007507">
    <property type="term" value="P:heart development"/>
    <property type="evidence" value="ECO:0000318"/>
    <property type="project" value="GO_Central"/>
</dbReference>
<dbReference type="GO" id="GO:0035556">
    <property type="term" value="P:intracellular signal transduction"/>
    <property type="evidence" value="ECO:0007669"/>
    <property type="project" value="InterPro"/>
</dbReference>
<dbReference type="GO" id="GO:0043161">
    <property type="term" value="P:proteasome-mediated ubiquitin-dependent protein catabolic process"/>
    <property type="evidence" value="ECO:0000250"/>
    <property type="project" value="UniProtKB"/>
</dbReference>
<dbReference type="GO" id="GO:0016567">
    <property type="term" value="P:protein ubiquitination"/>
    <property type="evidence" value="ECO:0007669"/>
    <property type="project" value="UniProtKB-UniPathway"/>
</dbReference>
<dbReference type="GO" id="GO:0014732">
    <property type="term" value="P:skeletal muscle atrophy"/>
    <property type="evidence" value="ECO:0000250"/>
    <property type="project" value="UniProtKB"/>
</dbReference>
<dbReference type="CDD" id="cd03721">
    <property type="entry name" value="SOCS_ASB2"/>
    <property type="match status" value="1"/>
</dbReference>
<dbReference type="FunFam" id="1.10.750.20:FF:000001">
    <property type="entry name" value="Ankyrin repeat and SOCS box containing 1"/>
    <property type="match status" value="1"/>
</dbReference>
<dbReference type="FunFam" id="1.25.40.20:FF:000246">
    <property type="entry name" value="Ankyrin repeat and SOCS box containing 2"/>
    <property type="match status" value="1"/>
</dbReference>
<dbReference type="FunFam" id="1.25.40.20:FF:000254">
    <property type="entry name" value="Ankyrin repeat and SOCS box containing 2"/>
    <property type="match status" value="1"/>
</dbReference>
<dbReference type="FunFam" id="1.25.40.20:FF:000905">
    <property type="entry name" value="Ankyrin repeat and SOCS box protein 2"/>
    <property type="match status" value="1"/>
</dbReference>
<dbReference type="Gene3D" id="1.25.40.20">
    <property type="entry name" value="Ankyrin repeat-containing domain"/>
    <property type="match status" value="2"/>
</dbReference>
<dbReference type="Gene3D" id="1.10.750.20">
    <property type="entry name" value="SOCS box"/>
    <property type="match status" value="1"/>
</dbReference>
<dbReference type="InterPro" id="IPR002110">
    <property type="entry name" value="Ankyrin_rpt"/>
</dbReference>
<dbReference type="InterPro" id="IPR036770">
    <property type="entry name" value="Ankyrin_rpt-contain_sf"/>
</dbReference>
<dbReference type="InterPro" id="IPR037330">
    <property type="entry name" value="ASB2_SOCS"/>
</dbReference>
<dbReference type="InterPro" id="IPR001496">
    <property type="entry name" value="SOCS_box"/>
</dbReference>
<dbReference type="InterPro" id="IPR036036">
    <property type="entry name" value="SOCS_box-like_dom_sf"/>
</dbReference>
<dbReference type="PANTHER" id="PTHR24171">
    <property type="entry name" value="ANKYRIN REPEAT DOMAIN-CONTAINING PROTEIN 39-RELATED"/>
    <property type="match status" value="1"/>
</dbReference>
<dbReference type="Pfam" id="PF12796">
    <property type="entry name" value="Ank_2"/>
    <property type="match status" value="3"/>
</dbReference>
<dbReference type="Pfam" id="PF13606">
    <property type="entry name" value="Ank_3"/>
    <property type="match status" value="1"/>
</dbReference>
<dbReference type="Pfam" id="PF13637">
    <property type="entry name" value="Ank_4"/>
    <property type="match status" value="1"/>
</dbReference>
<dbReference type="Pfam" id="PF07525">
    <property type="entry name" value="SOCS_box"/>
    <property type="match status" value="1"/>
</dbReference>
<dbReference type="PRINTS" id="PR01415">
    <property type="entry name" value="ANKYRIN"/>
</dbReference>
<dbReference type="SMART" id="SM00248">
    <property type="entry name" value="ANK"/>
    <property type="match status" value="10"/>
</dbReference>
<dbReference type="SMART" id="SM00253">
    <property type="entry name" value="SOCS"/>
    <property type="match status" value="1"/>
</dbReference>
<dbReference type="SMART" id="SM00969">
    <property type="entry name" value="SOCS_box"/>
    <property type="match status" value="1"/>
</dbReference>
<dbReference type="SUPFAM" id="SSF48403">
    <property type="entry name" value="Ankyrin repeat"/>
    <property type="match status" value="1"/>
</dbReference>
<dbReference type="SUPFAM" id="SSF158235">
    <property type="entry name" value="SOCS box-like"/>
    <property type="match status" value="1"/>
</dbReference>
<dbReference type="PROSITE" id="PS50297">
    <property type="entry name" value="ANK_REP_REGION"/>
    <property type="match status" value="1"/>
</dbReference>
<dbReference type="PROSITE" id="PS50088">
    <property type="entry name" value="ANK_REPEAT"/>
    <property type="match status" value="8"/>
</dbReference>
<dbReference type="PROSITE" id="PS50225">
    <property type="entry name" value="SOCS"/>
    <property type="match status" value="1"/>
</dbReference>
<feature type="chain" id="PRO_0000233302" description="Ankyrin repeat and SOCS box protein 2">
    <location>
        <begin position="1"/>
        <end position="633"/>
    </location>
</feature>
<feature type="domain" description="UIM" evidence="5">
    <location>
        <begin position="26"/>
        <end position="45"/>
    </location>
</feature>
<feature type="repeat" description="ANK 1" evidence="3">
    <location>
        <begin position="102"/>
        <end position="131"/>
    </location>
</feature>
<feature type="repeat" description="ANK 2" evidence="3">
    <location>
        <begin position="135"/>
        <end position="165"/>
    </location>
</feature>
<feature type="repeat" description="ANK 3" evidence="3">
    <location>
        <begin position="169"/>
        <end position="198"/>
    </location>
</feature>
<feature type="repeat" description="ANK 4" evidence="3">
    <location>
        <begin position="202"/>
        <end position="231"/>
    </location>
</feature>
<feature type="repeat" description="ANK 5" evidence="3">
    <location>
        <begin position="235"/>
        <end position="264"/>
    </location>
</feature>
<feature type="repeat" description="ANK 6" evidence="3">
    <location>
        <begin position="268"/>
        <end position="297"/>
    </location>
</feature>
<feature type="repeat" description="ANK 7" evidence="3">
    <location>
        <begin position="301"/>
        <end position="330"/>
    </location>
</feature>
<feature type="repeat" description="ANK 8" evidence="3">
    <location>
        <begin position="334"/>
        <end position="363"/>
    </location>
</feature>
<feature type="repeat" description="ANK 9" evidence="3">
    <location>
        <begin position="366"/>
        <end position="395"/>
    </location>
</feature>
<feature type="repeat" description="ANK 10" evidence="3">
    <location>
        <begin position="408"/>
        <end position="437"/>
    </location>
</feature>
<feature type="repeat" description="ANK 11" evidence="3">
    <location>
        <begin position="438"/>
        <end position="467"/>
    </location>
</feature>
<feature type="repeat" description="ANK 12" evidence="3">
    <location>
        <begin position="474"/>
        <end position="502"/>
    </location>
</feature>
<feature type="domain" description="SOCS box" evidence="4">
    <location>
        <begin position="579"/>
        <end position="633"/>
    </location>
</feature>
<feature type="modified residue" description="Phosphoserine" evidence="2">
    <location>
        <position position="369"/>
    </location>
</feature>
<gene>
    <name evidence="2" type="primary">ASB2</name>
</gene>
<accession>Q3SX45</accession>
<reference evidence="6" key="1">
    <citation type="submission" date="2005-09" db="EMBL/GenBank/DDBJ databases">
        <authorList>
            <consortium name="NIH - Mammalian Gene Collection (MGC) project"/>
        </authorList>
    </citation>
    <scope>NUCLEOTIDE SEQUENCE [LARGE SCALE MRNA]</scope>
    <source>
        <strain evidence="6">Hereford</strain>
        <tissue evidence="6">Uterus</tissue>
    </source>
</reference>
<sequence>MATEISARGRPRAIGQEEYNLYSSLSEDELVQMAIEQSLADKTRGPTTTETTVPTRVNREPAHFYPWTRSSVSPESALTSAPKGLFQEVMQKYNRSKSSQLAPVDPVLKAIKEDDEEALTAMIKAGKNLSEPNKEGWLPLHEAAYYGQLNCLKALHRAYPAVIDQRTLQEETALYLATCRGHVDCLQFLLQAGAEPDISNKSRETPLYKACERKNVEAVRILVQYKADTNHRCNRGWTALHESVARNDLEVMEILVSGGAKVEAKNAYGITPLFVAAQSGQLEALRFLAKYGADINTQASDSASALYEACKNGHEEVVEFLLSQGADANKTNKDGMLPLHIASKKGNYRIVQMLLPVTSRTRVRRSGISPLHLAAERNNDEVLEALLGARFDVNAPLAPERARLYEDRRSSALYFAVVNNNVYATELLLLAGADPNRDVINPLLVAIRHGCLRTMQLLLDHGANIDAYIATHPTAFPATIMFAMKCLSLLKFLMDLGCNGEPCFSCLYGNGPHPPAPPPSNRFNDAPASDKAPSAVQFCEFLSAPEVSRWAGPIIDVLLDYVGNVQLCSRLKEHIDSFEDWAVIKEKAEPPRPLAHLCRLRVRKAIGKYRIKLLDTLPLPGRLIRYLKYENTQ</sequence>
<organism>
    <name type="scientific">Bos taurus</name>
    <name type="common">Bovine</name>
    <dbReference type="NCBI Taxonomy" id="9913"/>
    <lineage>
        <taxon>Eukaryota</taxon>
        <taxon>Metazoa</taxon>
        <taxon>Chordata</taxon>
        <taxon>Craniata</taxon>
        <taxon>Vertebrata</taxon>
        <taxon>Euteleostomi</taxon>
        <taxon>Mammalia</taxon>
        <taxon>Eutheria</taxon>
        <taxon>Laurasiatheria</taxon>
        <taxon>Artiodactyla</taxon>
        <taxon>Ruminantia</taxon>
        <taxon>Pecora</taxon>
        <taxon>Bovidae</taxon>
        <taxon>Bovinae</taxon>
        <taxon>Bos</taxon>
    </lineage>
</organism>
<evidence type="ECO:0000250" key="1">
    <source>
        <dbReference type="UniProtKB" id="Q8K0L0"/>
    </source>
</evidence>
<evidence type="ECO:0000250" key="2">
    <source>
        <dbReference type="UniProtKB" id="Q96Q27"/>
    </source>
</evidence>
<evidence type="ECO:0000255" key="3"/>
<evidence type="ECO:0000255" key="4">
    <source>
        <dbReference type="PROSITE-ProRule" id="PRU00194"/>
    </source>
</evidence>
<evidence type="ECO:0000305" key="5"/>
<evidence type="ECO:0000312" key="6">
    <source>
        <dbReference type="EMBL" id="AAI04498.1"/>
    </source>
</evidence>
<name>ASB2_BOVIN</name>
<comment type="function">
    <text evidence="1 2">Substrate-recognition component of a SCF-like ECS (Elongin-Cullin-SOCS-box protein) E3 ubiquitin-protein ligase complex which mediates the ubiquitination and subsequent proteasomal degradation of target proteins (By similarity). Mediates Notch-induced ubiquitination and degradation of substrates including E2A and JAK2 (By similarity). Required during embryonic heart development for complete heart looping (By similarity). Required for cardiomyocyte differentiation (By similarity). Involved in myogenic differentiation and targets filamin FLNB for proteasomal degradation but not filamin FLNA (By similarity). Also targets DES for proteasomal degradation (By similarity). Acts as a negative regulator of skeletal muscle mass (By similarity).</text>
</comment>
<comment type="pathway">
    <text>Protein modification; protein ubiquitination.</text>
</comment>
<comment type="subunit">
    <text evidence="1 2">Component of a probable ECS E3 ubiquitin-protein ligase complex which contains CUL5, either RBX1 or RNF7/RBX2, Elongin BC complex (ELOB and ELOC) and ASB2. Interacts with SKP2. Through its interaction with SKP2, likely to bridge the formation of dimeric E3-ubiquitin-protein ligase complexes composed of an ECS complex and an SCF(SKP2) complex. Interacts with JAK2; the interaction targets JAK2 for Notch-mediated proteasomal degradation. Interacts with TCF3/E2A; the interaction is mediated by SKP2 and targets TCF3 for Notch-mediated proteasomal degradation (By similarity). Interacts with DES (By similarity).</text>
</comment>
<comment type="subcellular location">
    <subcellularLocation>
        <location evidence="2">Cytoplasm</location>
        <location evidence="2">Cytoskeleton</location>
        <location evidence="2">Stress fiber</location>
    </subcellularLocation>
    <subcellularLocation>
        <location evidence="1">Cytoplasm</location>
        <location evidence="1">Myofibril</location>
        <location evidence="1">Sarcomere</location>
        <location evidence="1">Z line</location>
    </subcellularLocation>
    <text evidence="1">Localizes to the Z line in cardiomyocytes.</text>
</comment>
<comment type="domain">
    <text evidence="2">The SOCS box domain mediates the interaction with the Elongin BC complex, an adapter module in different E3 ubiquitin-protein ligase complexes.</text>
</comment>
<comment type="domain">
    <text evidence="2">The UIM domain is required for monoubiquitination.</text>
</comment>
<comment type="PTM">
    <text evidence="2">Monoubiquitinated.</text>
</comment>
<comment type="similarity">
    <text evidence="5">Belongs to the ankyrin SOCS box (ASB) family.</text>
</comment>
<keyword id="KW-0040">ANK repeat</keyword>
<keyword id="KW-0963">Cytoplasm</keyword>
<keyword id="KW-0206">Cytoskeleton</keyword>
<keyword id="KW-0597">Phosphoprotein</keyword>
<keyword id="KW-1185">Reference proteome</keyword>
<keyword id="KW-0677">Repeat</keyword>
<keyword id="KW-0832">Ubl conjugation</keyword>
<keyword id="KW-0833">Ubl conjugation pathway</keyword>
<protein>
    <recommendedName>
        <fullName>Ankyrin repeat and SOCS box protein 2</fullName>
        <shortName>ASB-2</shortName>
    </recommendedName>
</protein>